<sequence>MRVYYDRDADVNLIKSKKVVIVGYGSQGRAHALNLKDSGAANVRVALREGSATVQKAQADGFEVMNVADAAKWADLMMMATPDELQADIYRDHIHNNLRDGAAIAFAHGLNVHCGLIEPKKTVDVVMIAPKGPGHTVRGEYQKGGGVPCLIAIHQDASGNAHDLALSYASGVGGGRSGVIETTFKEECETDLFGEQAVLCGGVVELIRTGFEVLVEAGYAPEMAYFECLNEMKLIVDLIYEGGIANMNYSISNTAEWGEYVTGPRIITAETKAEMKRVLKDIQTGKFTSDWMQEWKAGAARFKGIRRLNDAHQIEEVGGKLRAMMPWIEKNKLVDKARN</sequence>
<evidence type="ECO:0000255" key="1">
    <source>
        <dbReference type="HAMAP-Rule" id="MF_00435"/>
    </source>
</evidence>
<evidence type="ECO:0000255" key="2">
    <source>
        <dbReference type="PROSITE-ProRule" id="PRU01197"/>
    </source>
</evidence>
<evidence type="ECO:0000255" key="3">
    <source>
        <dbReference type="PROSITE-ProRule" id="PRU01198"/>
    </source>
</evidence>
<keyword id="KW-0028">Amino-acid biosynthesis</keyword>
<keyword id="KW-0100">Branched-chain amino acid biosynthesis</keyword>
<keyword id="KW-0460">Magnesium</keyword>
<keyword id="KW-0479">Metal-binding</keyword>
<keyword id="KW-0521">NADP</keyword>
<keyword id="KW-0560">Oxidoreductase</keyword>
<keyword id="KW-1185">Reference proteome</keyword>
<reference key="1">
    <citation type="journal article" date="2005" name="Infect. Immun.">
        <title>Whole-genome analyses of speciation events in pathogenic Brucellae.</title>
        <authorList>
            <person name="Chain P.S."/>
            <person name="Comerci D.J."/>
            <person name="Tolmasky M.E."/>
            <person name="Larimer F.W."/>
            <person name="Malfatti S.A."/>
            <person name="Vergez L.M."/>
            <person name="Aguero F."/>
            <person name="Land M.L."/>
            <person name="Ugalde R.A."/>
            <person name="Garcia E."/>
        </authorList>
    </citation>
    <scope>NUCLEOTIDE SEQUENCE [LARGE SCALE GENOMIC DNA]</scope>
    <source>
        <strain>2308</strain>
    </source>
</reference>
<gene>
    <name evidence="1" type="primary">ilvC</name>
    <name type="ordered locus">BAB1_1399</name>
</gene>
<accession>Q2YQN2</accession>
<organism>
    <name type="scientific">Brucella abortus (strain 2308)</name>
    <dbReference type="NCBI Taxonomy" id="359391"/>
    <lineage>
        <taxon>Bacteria</taxon>
        <taxon>Pseudomonadati</taxon>
        <taxon>Pseudomonadota</taxon>
        <taxon>Alphaproteobacteria</taxon>
        <taxon>Hyphomicrobiales</taxon>
        <taxon>Brucellaceae</taxon>
        <taxon>Brucella/Ochrobactrum group</taxon>
        <taxon>Brucella</taxon>
    </lineage>
</organism>
<dbReference type="EC" id="1.1.1.86" evidence="1"/>
<dbReference type="EMBL" id="AM040264">
    <property type="protein sequence ID" value="CAJ11355.1"/>
    <property type="molecule type" value="Genomic_DNA"/>
</dbReference>
<dbReference type="RefSeq" id="WP_002964491.1">
    <property type="nucleotide sequence ID" value="NZ_KN046823.1"/>
</dbReference>
<dbReference type="SMR" id="Q2YQN2"/>
<dbReference type="STRING" id="359391.BAB1_1399"/>
<dbReference type="GeneID" id="93016314"/>
<dbReference type="KEGG" id="bmf:BAB1_1399"/>
<dbReference type="PATRIC" id="fig|359391.11.peg.849"/>
<dbReference type="HOGENOM" id="CLU_033821_0_1_5"/>
<dbReference type="PhylomeDB" id="Q2YQN2"/>
<dbReference type="UniPathway" id="UPA00047">
    <property type="reaction ID" value="UER00056"/>
</dbReference>
<dbReference type="UniPathway" id="UPA00049">
    <property type="reaction ID" value="UER00060"/>
</dbReference>
<dbReference type="Proteomes" id="UP000002719">
    <property type="component" value="Chromosome I"/>
</dbReference>
<dbReference type="GO" id="GO:0005829">
    <property type="term" value="C:cytosol"/>
    <property type="evidence" value="ECO:0007669"/>
    <property type="project" value="TreeGrafter"/>
</dbReference>
<dbReference type="GO" id="GO:0004455">
    <property type="term" value="F:ketol-acid reductoisomerase activity"/>
    <property type="evidence" value="ECO:0007669"/>
    <property type="project" value="UniProtKB-UniRule"/>
</dbReference>
<dbReference type="GO" id="GO:0000287">
    <property type="term" value="F:magnesium ion binding"/>
    <property type="evidence" value="ECO:0007669"/>
    <property type="project" value="UniProtKB-UniRule"/>
</dbReference>
<dbReference type="GO" id="GO:0050661">
    <property type="term" value="F:NADP binding"/>
    <property type="evidence" value="ECO:0007669"/>
    <property type="project" value="InterPro"/>
</dbReference>
<dbReference type="GO" id="GO:0009097">
    <property type="term" value="P:isoleucine biosynthetic process"/>
    <property type="evidence" value="ECO:0007669"/>
    <property type="project" value="UniProtKB-UniRule"/>
</dbReference>
<dbReference type="GO" id="GO:0009099">
    <property type="term" value="P:L-valine biosynthetic process"/>
    <property type="evidence" value="ECO:0007669"/>
    <property type="project" value="UniProtKB-UniRule"/>
</dbReference>
<dbReference type="FunFam" id="3.40.50.720:FF:000023">
    <property type="entry name" value="Ketol-acid reductoisomerase (NADP(+))"/>
    <property type="match status" value="1"/>
</dbReference>
<dbReference type="Gene3D" id="6.10.240.10">
    <property type="match status" value="1"/>
</dbReference>
<dbReference type="Gene3D" id="3.40.50.720">
    <property type="entry name" value="NAD(P)-binding Rossmann-like Domain"/>
    <property type="match status" value="1"/>
</dbReference>
<dbReference type="HAMAP" id="MF_00435">
    <property type="entry name" value="IlvC"/>
    <property type="match status" value="1"/>
</dbReference>
<dbReference type="InterPro" id="IPR008927">
    <property type="entry name" value="6-PGluconate_DH-like_C_sf"/>
</dbReference>
<dbReference type="InterPro" id="IPR013023">
    <property type="entry name" value="KARI"/>
</dbReference>
<dbReference type="InterPro" id="IPR000506">
    <property type="entry name" value="KARI_C"/>
</dbReference>
<dbReference type="InterPro" id="IPR013116">
    <property type="entry name" value="KARI_N"/>
</dbReference>
<dbReference type="InterPro" id="IPR014359">
    <property type="entry name" value="KARI_prok"/>
</dbReference>
<dbReference type="InterPro" id="IPR036291">
    <property type="entry name" value="NAD(P)-bd_dom_sf"/>
</dbReference>
<dbReference type="NCBIfam" id="TIGR00465">
    <property type="entry name" value="ilvC"/>
    <property type="match status" value="1"/>
</dbReference>
<dbReference type="NCBIfam" id="NF004017">
    <property type="entry name" value="PRK05479.1"/>
    <property type="match status" value="1"/>
</dbReference>
<dbReference type="NCBIfam" id="NF009940">
    <property type="entry name" value="PRK13403.1"/>
    <property type="match status" value="1"/>
</dbReference>
<dbReference type="PANTHER" id="PTHR21371">
    <property type="entry name" value="KETOL-ACID REDUCTOISOMERASE, MITOCHONDRIAL"/>
    <property type="match status" value="1"/>
</dbReference>
<dbReference type="PANTHER" id="PTHR21371:SF1">
    <property type="entry name" value="KETOL-ACID REDUCTOISOMERASE, MITOCHONDRIAL"/>
    <property type="match status" value="1"/>
</dbReference>
<dbReference type="Pfam" id="PF01450">
    <property type="entry name" value="KARI_C"/>
    <property type="match status" value="1"/>
</dbReference>
<dbReference type="Pfam" id="PF07991">
    <property type="entry name" value="KARI_N"/>
    <property type="match status" value="1"/>
</dbReference>
<dbReference type="PIRSF" id="PIRSF000116">
    <property type="entry name" value="IlvC_gammaproteo"/>
    <property type="match status" value="1"/>
</dbReference>
<dbReference type="SUPFAM" id="SSF48179">
    <property type="entry name" value="6-phosphogluconate dehydrogenase C-terminal domain-like"/>
    <property type="match status" value="1"/>
</dbReference>
<dbReference type="SUPFAM" id="SSF51735">
    <property type="entry name" value="NAD(P)-binding Rossmann-fold domains"/>
    <property type="match status" value="1"/>
</dbReference>
<dbReference type="PROSITE" id="PS51851">
    <property type="entry name" value="KARI_C"/>
    <property type="match status" value="1"/>
</dbReference>
<dbReference type="PROSITE" id="PS51850">
    <property type="entry name" value="KARI_N"/>
    <property type="match status" value="1"/>
</dbReference>
<feature type="chain" id="PRO_0000226164" description="Ketol-acid reductoisomerase (NADP(+))">
    <location>
        <begin position="1"/>
        <end position="339"/>
    </location>
</feature>
<feature type="domain" description="KARI N-terminal Rossmann" evidence="2">
    <location>
        <begin position="1"/>
        <end position="182"/>
    </location>
</feature>
<feature type="domain" description="KARI C-terminal knotted" evidence="3">
    <location>
        <begin position="183"/>
        <end position="328"/>
    </location>
</feature>
<feature type="active site" evidence="1">
    <location>
        <position position="108"/>
    </location>
</feature>
<feature type="binding site" evidence="1">
    <location>
        <begin position="24"/>
        <end position="27"/>
    </location>
    <ligand>
        <name>NADP(+)</name>
        <dbReference type="ChEBI" id="CHEBI:58349"/>
    </ligand>
</feature>
<feature type="binding site" evidence="1">
    <location>
        <position position="48"/>
    </location>
    <ligand>
        <name>NADP(+)</name>
        <dbReference type="ChEBI" id="CHEBI:58349"/>
    </ligand>
</feature>
<feature type="binding site" evidence="1">
    <location>
        <position position="51"/>
    </location>
    <ligand>
        <name>NADP(+)</name>
        <dbReference type="ChEBI" id="CHEBI:58349"/>
    </ligand>
</feature>
<feature type="binding site" evidence="1">
    <location>
        <position position="53"/>
    </location>
    <ligand>
        <name>NADP(+)</name>
        <dbReference type="ChEBI" id="CHEBI:58349"/>
    </ligand>
</feature>
<feature type="binding site" evidence="1">
    <location>
        <begin position="83"/>
        <end position="86"/>
    </location>
    <ligand>
        <name>NADP(+)</name>
        <dbReference type="ChEBI" id="CHEBI:58349"/>
    </ligand>
</feature>
<feature type="binding site" evidence="1">
    <location>
        <position position="134"/>
    </location>
    <ligand>
        <name>NADP(+)</name>
        <dbReference type="ChEBI" id="CHEBI:58349"/>
    </ligand>
</feature>
<feature type="binding site" evidence="1">
    <location>
        <position position="191"/>
    </location>
    <ligand>
        <name>Mg(2+)</name>
        <dbReference type="ChEBI" id="CHEBI:18420"/>
        <label>1</label>
    </ligand>
</feature>
<feature type="binding site" evidence="1">
    <location>
        <position position="191"/>
    </location>
    <ligand>
        <name>Mg(2+)</name>
        <dbReference type="ChEBI" id="CHEBI:18420"/>
        <label>2</label>
    </ligand>
</feature>
<feature type="binding site" evidence="1">
    <location>
        <position position="195"/>
    </location>
    <ligand>
        <name>Mg(2+)</name>
        <dbReference type="ChEBI" id="CHEBI:18420"/>
        <label>1</label>
    </ligand>
</feature>
<feature type="binding site" evidence="1">
    <location>
        <position position="227"/>
    </location>
    <ligand>
        <name>Mg(2+)</name>
        <dbReference type="ChEBI" id="CHEBI:18420"/>
        <label>2</label>
    </ligand>
</feature>
<feature type="binding site" evidence="1">
    <location>
        <position position="231"/>
    </location>
    <ligand>
        <name>Mg(2+)</name>
        <dbReference type="ChEBI" id="CHEBI:18420"/>
        <label>2</label>
    </ligand>
</feature>
<feature type="binding site" evidence="1">
    <location>
        <position position="252"/>
    </location>
    <ligand>
        <name>substrate</name>
    </ligand>
</feature>
<comment type="function">
    <text evidence="1">Involved in the biosynthesis of branched-chain amino acids (BCAA). Catalyzes an alkyl-migration followed by a ketol-acid reduction of (S)-2-acetolactate (S2AL) to yield (R)-2,3-dihydroxy-isovalerate. In the isomerase reaction, S2AL is rearranged via a Mg-dependent methyl migration to produce 3-hydroxy-3-methyl-2-ketobutyrate (HMKB). In the reductase reaction, this 2-ketoacid undergoes a metal-dependent reduction by NADPH to yield (R)-2,3-dihydroxy-isovalerate.</text>
</comment>
<comment type="catalytic activity">
    <reaction evidence="1">
        <text>(2R)-2,3-dihydroxy-3-methylbutanoate + NADP(+) = (2S)-2-acetolactate + NADPH + H(+)</text>
        <dbReference type="Rhea" id="RHEA:22068"/>
        <dbReference type="ChEBI" id="CHEBI:15378"/>
        <dbReference type="ChEBI" id="CHEBI:49072"/>
        <dbReference type="ChEBI" id="CHEBI:57783"/>
        <dbReference type="ChEBI" id="CHEBI:58349"/>
        <dbReference type="ChEBI" id="CHEBI:58476"/>
        <dbReference type="EC" id="1.1.1.86"/>
    </reaction>
</comment>
<comment type="catalytic activity">
    <reaction evidence="1">
        <text>(2R,3R)-2,3-dihydroxy-3-methylpentanoate + NADP(+) = (S)-2-ethyl-2-hydroxy-3-oxobutanoate + NADPH + H(+)</text>
        <dbReference type="Rhea" id="RHEA:13493"/>
        <dbReference type="ChEBI" id="CHEBI:15378"/>
        <dbReference type="ChEBI" id="CHEBI:49256"/>
        <dbReference type="ChEBI" id="CHEBI:49258"/>
        <dbReference type="ChEBI" id="CHEBI:57783"/>
        <dbReference type="ChEBI" id="CHEBI:58349"/>
        <dbReference type="EC" id="1.1.1.86"/>
    </reaction>
</comment>
<comment type="cofactor">
    <cofactor evidence="1">
        <name>Mg(2+)</name>
        <dbReference type="ChEBI" id="CHEBI:18420"/>
    </cofactor>
    <text evidence="1">Binds 2 magnesium ions per subunit.</text>
</comment>
<comment type="pathway">
    <text evidence="1">Amino-acid biosynthesis; L-isoleucine biosynthesis; L-isoleucine from 2-oxobutanoate: step 2/4.</text>
</comment>
<comment type="pathway">
    <text evidence="1">Amino-acid biosynthesis; L-valine biosynthesis; L-valine from pyruvate: step 2/4.</text>
</comment>
<comment type="similarity">
    <text evidence="1">Belongs to the ketol-acid reductoisomerase family.</text>
</comment>
<protein>
    <recommendedName>
        <fullName evidence="1">Ketol-acid reductoisomerase (NADP(+))</fullName>
        <shortName evidence="1">KARI</shortName>
        <ecNumber evidence="1">1.1.1.86</ecNumber>
    </recommendedName>
    <alternativeName>
        <fullName evidence="1">Acetohydroxy-acid isomeroreductase</fullName>
        <shortName evidence="1">AHIR</shortName>
    </alternativeName>
    <alternativeName>
        <fullName evidence="1">Alpha-keto-beta-hydroxylacyl reductoisomerase</fullName>
    </alternativeName>
    <alternativeName>
        <fullName evidence="1">Ketol-acid reductoisomerase type 1</fullName>
    </alternativeName>
    <alternativeName>
        <fullName evidence="1">Ketol-acid reductoisomerase type I</fullName>
    </alternativeName>
</protein>
<proteinExistence type="inferred from homology"/>
<name>ILVC_BRUA2</name>